<keyword id="KW-0066">ATP synthesis</keyword>
<keyword id="KW-0067">ATP-binding</keyword>
<keyword id="KW-1003">Cell membrane</keyword>
<keyword id="KW-0375">Hydrogen ion transport</keyword>
<keyword id="KW-0406">Ion transport</keyword>
<keyword id="KW-0472">Membrane</keyword>
<keyword id="KW-0547">Nucleotide-binding</keyword>
<keyword id="KW-1278">Translocase</keyword>
<keyword id="KW-0813">Transport</keyword>
<evidence type="ECO:0000255" key="1">
    <source>
        <dbReference type="HAMAP-Rule" id="MF_00309"/>
    </source>
</evidence>
<proteinExistence type="inferred from homology"/>
<dbReference type="EC" id="7.1.2.2" evidence="1"/>
<dbReference type="EMBL" id="CP000562">
    <property type="protein sequence ID" value="ABN56221.1"/>
    <property type="molecule type" value="Genomic_DNA"/>
</dbReference>
<dbReference type="RefSeq" id="WP_011843142.1">
    <property type="nucleotide sequence ID" value="NC_009051.1"/>
</dbReference>
<dbReference type="SMR" id="A3CS71"/>
<dbReference type="STRING" id="368407.Memar_0287"/>
<dbReference type="GeneID" id="4846211"/>
<dbReference type="KEGG" id="mem:Memar_0287"/>
<dbReference type="eggNOG" id="arCOG00868">
    <property type="taxonomic scope" value="Archaea"/>
</dbReference>
<dbReference type="HOGENOM" id="CLU_008162_3_1_2"/>
<dbReference type="OrthoDB" id="115235at2157"/>
<dbReference type="Proteomes" id="UP000002146">
    <property type="component" value="Chromosome"/>
</dbReference>
<dbReference type="GO" id="GO:0005886">
    <property type="term" value="C:plasma membrane"/>
    <property type="evidence" value="ECO:0007669"/>
    <property type="project" value="UniProtKB-SubCell"/>
</dbReference>
<dbReference type="GO" id="GO:0033178">
    <property type="term" value="C:proton-transporting two-sector ATPase complex, catalytic domain"/>
    <property type="evidence" value="ECO:0007669"/>
    <property type="project" value="InterPro"/>
</dbReference>
<dbReference type="GO" id="GO:0005524">
    <property type="term" value="F:ATP binding"/>
    <property type="evidence" value="ECO:0007669"/>
    <property type="project" value="UniProtKB-UniRule"/>
</dbReference>
<dbReference type="GO" id="GO:0046933">
    <property type="term" value="F:proton-transporting ATP synthase activity, rotational mechanism"/>
    <property type="evidence" value="ECO:0007669"/>
    <property type="project" value="UniProtKB-UniRule"/>
</dbReference>
<dbReference type="GO" id="GO:0046961">
    <property type="term" value="F:proton-transporting ATPase activity, rotational mechanism"/>
    <property type="evidence" value="ECO:0007669"/>
    <property type="project" value="InterPro"/>
</dbReference>
<dbReference type="GO" id="GO:0042777">
    <property type="term" value="P:proton motive force-driven plasma membrane ATP synthesis"/>
    <property type="evidence" value="ECO:0007669"/>
    <property type="project" value="UniProtKB-UniRule"/>
</dbReference>
<dbReference type="CDD" id="cd18111">
    <property type="entry name" value="ATP-synt_V_A-type_alpha_C"/>
    <property type="match status" value="1"/>
</dbReference>
<dbReference type="CDD" id="cd01134">
    <property type="entry name" value="V_A-ATPase_A"/>
    <property type="match status" value="1"/>
</dbReference>
<dbReference type="FunFam" id="3.40.50.300:FF:000675">
    <property type="entry name" value="V-type ATP synthase alpha chain"/>
    <property type="match status" value="1"/>
</dbReference>
<dbReference type="FunFam" id="1.10.1140.10:FF:000002">
    <property type="entry name" value="V-type proton ATPase catalytic subunit A"/>
    <property type="match status" value="1"/>
</dbReference>
<dbReference type="FunFam" id="2.40.50.100:FF:000008">
    <property type="entry name" value="V-type proton ATPase catalytic subunit A"/>
    <property type="match status" value="1"/>
</dbReference>
<dbReference type="Gene3D" id="2.40.30.20">
    <property type="match status" value="1"/>
</dbReference>
<dbReference type="Gene3D" id="2.40.50.100">
    <property type="match status" value="1"/>
</dbReference>
<dbReference type="Gene3D" id="1.10.1140.10">
    <property type="entry name" value="Bovine Mitochondrial F1-atpase, Atp Synthase Beta Chain, Chain D, domain 3"/>
    <property type="match status" value="1"/>
</dbReference>
<dbReference type="Gene3D" id="3.40.50.300">
    <property type="entry name" value="P-loop containing nucleotide triphosphate hydrolases"/>
    <property type="match status" value="1"/>
</dbReference>
<dbReference type="HAMAP" id="MF_00309">
    <property type="entry name" value="ATP_synth_A_arch"/>
    <property type="match status" value="1"/>
</dbReference>
<dbReference type="InterPro" id="IPR055190">
    <property type="entry name" value="ATP-synt_VA_C"/>
</dbReference>
<dbReference type="InterPro" id="IPR031686">
    <property type="entry name" value="ATP-synth_a_Xtn"/>
</dbReference>
<dbReference type="InterPro" id="IPR023366">
    <property type="entry name" value="ATP_synth_asu-like_sf"/>
</dbReference>
<dbReference type="InterPro" id="IPR005726">
    <property type="entry name" value="ATP_synth_asu_arc"/>
</dbReference>
<dbReference type="InterPro" id="IPR020003">
    <property type="entry name" value="ATPase_a/bsu_AS"/>
</dbReference>
<dbReference type="InterPro" id="IPR004100">
    <property type="entry name" value="ATPase_F1/V1/A1_a/bsu_N"/>
</dbReference>
<dbReference type="InterPro" id="IPR036121">
    <property type="entry name" value="ATPase_F1/V1/A1_a/bsu_N_sf"/>
</dbReference>
<dbReference type="InterPro" id="IPR000194">
    <property type="entry name" value="ATPase_F1/V1/A1_a/bsu_nucl-bd"/>
</dbReference>
<dbReference type="InterPro" id="IPR024034">
    <property type="entry name" value="ATPase_F1/V1_b/a_C"/>
</dbReference>
<dbReference type="InterPro" id="IPR027417">
    <property type="entry name" value="P-loop_NTPase"/>
</dbReference>
<dbReference type="InterPro" id="IPR001763">
    <property type="entry name" value="Rhodanese-like_dom"/>
</dbReference>
<dbReference type="InterPro" id="IPR022878">
    <property type="entry name" value="V-ATPase_asu"/>
</dbReference>
<dbReference type="NCBIfam" id="TIGR01043">
    <property type="entry name" value="ATP_syn_A_arch"/>
    <property type="match status" value="1"/>
</dbReference>
<dbReference type="NCBIfam" id="NF003220">
    <property type="entry name" value="PRK04192.1"/>
    <property type="match status" value="1"/>
</dbReference>
<dbReference type="PANTHER" id="PTHR43607:SF1">
    <property type="entry name" value="H(+)-TRANSPORTING TWO-SECTOR ATPASE"/>
    <property type="match status" value="1"/>
</dbReference>
<dbReference type="PANTHER" id="PTHR43607">
    <property type="entry name" value="V-TYPE PROTON ATPASE CATALYTIC SUBUNIT A"/>
    <property type="match status" value="1"/>
</dbReference>
<dbReference type="Pfam" id="PF00006">
    <property type="entry name" value="ATP-synt_ab"/>
    <property type="match status" value="1"/>
</dbReference>
<dbReference type="Pfam" id="PF02874">
    <property type="entry name" value="ATP-synt_ab_N"/>
    <property type="match status" value="1"/>
</dbReference>
<dbReference type="Pfam" id="PF16886">
    <property type="entry name" value="ATP-synt_ab_Xtn"/>
    <property type="match status" value="1"/>
</dbReference>
<dbReference type="Pfam" id="PF22919">
    <property type="entry name" value="ATP-synt_VA_C"/>
    <property type="match status" value="1"/>
</dbReference>
<dbReference type="SUPFAM" id="SSF47917">
    <property type="entry name" value="C-terminal domain of alpha and beta subunits of F1 ATP synthase"/>
    <property type="match status" value="1"/>
</dbReference>
<dbReference type="SUPFAM" id="SSF50615">
    <property type="entry name" value="N-terminal domain of alpha and beta subunits of F1 ATP synthase"/>
    <property type="match status" value="1"/>
</dbReference>
<dbReference type="SUPFAM" id="SSF52540">
    <property type="entry name" value="P-loop containing nucleoside triphosphate hydrolases"/>
    <property type="match status" value="1"/>
</dbReference>
<dbReference type="PROSITE" id="PS00152">
    <property type="entry name" value="ATPASE_ALPHA_BETA"/>
    <property type="match status" value="1"/>
</dbReference>
<protein>
    <recommendedName>
        <fullName evidence="1">A-type ATP synthase subunit A</fullName>
        <ecNumber evidence="1">7.1.2.2</ecNumber>
    </recommendedName>
</protein>
<name>AATA_METMJ</name>
<comment type="function">
    <text evidence="1">Component of the A-type ATP synthase that produces ATP from ADP in the presence of a proton gradient across the membrane. The A chain is the catalytic subunit.</text>
</comment>
<comment type="catalytic activity">
    <reaction evidence="1">
        <text>ATP + H2O + 4 H(+)(in) = ADP + phosphate + 5 H(+)(out)</text>
        <dbReference type="Rhea" id="RHEA:57720"/>
        <dbReference type="ChEBI" id="CHEBI:15377"/>
        <dbReference type="ChEBI" id="CHEBI:15378"/>
        <dbReference type="ChEBI" id="CHEBI:30616"/>
        <dbReference type="ChEBI" id="CHEBI:43474"/>
        <dbReference type="ChEBI" id="CHEBI:456216"/>
        <dbReference type="EC" id="7.1.2.2"/>
    </reaction>
</comment>
<comment type="subunit">
    <text evidence="1">Has multiple subunits with at least A(3), B(3), C, D, E, F, H, I and proteolipid K(x).</text>
</comment>
<comment type="subcellular location">
    <subcellularLocation>
        <location evidence="1">Cell membrane</location>
        <topology evidence="1">Peripheral membrane protein</topology>
    </subcellularLocation>
</comment>
<comment type="similarity">
    <text evidence="1">Belongs to the ATPase alpha/beta chains family.</text>
</comment>
<feature type="chain" id="PRO_0000322478" description="A-type ATP synthase subunit A">
    <location>
        <begin position="1"/>
        <end position="584"/>
    </location>
</feature>
<feature type="binding site" evidence="1">
    <location>
        <begin position="234"/>
        <end position="241"/>
    </location>
    <ligand>
        <name>ATP</name>
        <dbReference type="ChEBI" id="CHEBI:30616"/>
    </ligand>
</feature>
<gene>
    <name evidence="1" type="primary">atpA</name>
    <name type="ordered locus">Memar_0287</name>
</gene>
<accession>A3CS71</accession>
<organism>
    <name type="scientific">Methanoculleus marisnigri (strain ATCC 35101 / DSM 1498 / JR1)</name>
    <dbReference type="NCBI Taxonomy" id="368407"/>
    <lineage>
        <taxon>Archaea</taxon>
        <taxon>Methanobacteriati</taxon>
        <taxon>Methanobacteriota</taxon>
        <taxon>Stenosarchaea group</taxon>
        <taxon>Methanomicrobia</taxon>
        <taxon>Methanomicrobiales</taxon>
        <taxon>Methanomicrobiaceae</taxon>
        <taxon>Methanoculleus</taxon>
    </lineage>
</organism>
<sequence length="584" mass="64328">MDKGKENRAQGVLKRISGPVVTAVGLDAHMYDVVKVGNEELMGEVIKIQGENIIIQVYEDTAGIRPGESVGNTGLSLAVELGPGLLTSIYDGIQRPLEVLVDKMGNFIERGVSAPGLSHEKKWEFVPTVKKGDEVKAGDILGTVQETNIVHKVMVPPKAKGGKIKKISGGSFTVDETVCVLEDGTEIAMLQRWPVRVPRPVTQKLNPDIPLITGQRILDGLFPIAKGGTAAIPGPFGSGKTVTQQQLAKWSDAEIVVYIGCGERGNEMTEVLTEFPELEDPKTGKPLMERTVLIANTSNMPVAAREASVYTGITIAEYFRDMGYDVSLMADSTSRWAEAMREISSRLEEMPGEEGYPAYLAARLSEFYERAGRVISLNGEGGSVSVIGAVSPPGGDFSEPVTQNTLRIVKVFWALDAKLSQRRHFPAINWLNSYSLYLDALNEWYDKEVSPEWNPLRAWAMGVLQKEAELQEIVQLVGSDALPDEEQVTIEVARMIREIFLQQNAYDAVDTFCPMSKQYDMMKAIKHYADLARTAQTGGATPQQVIGIRSKNELPQIKFIRDYEPELAKIMKDMEAEFDAMRAV</sequence>
<reference key="1">
    <citation type="journal article" date="2009" name="Stand. Genomic Sci.">
        <title>Complete genome sequence of Methanoculleus marisnigri Romesser et al. 1981 type strain JR1.</title>
        <authorList>
            <person name="Anderson I.J."/>
            <person name="Sieprawska-Lupa M."/>
            <person name="Lapidus A."/>
            <person name="Nolan M."/>
            <person name="Copeland A."/>
            <person name="Glavina Del Rio T."/>
            <person name="Tice H."/>
            <person name="Dalin E."/>
            <person name="Barry K."/>
            <person name="Saunders E."/>
            <person name="Han C."/>
            <person name="Brettin T."/>
            <person name="Detter J.C."/>
            <person name="Bruce D."/>
            <person name="Mikhailova N."/>
            <person name="Pitluck S."/>
            <person name="Hauser L."/>
            <person name="Land M."/>
            <person name="Lucas S."/>
            <person name="Richardson P."/>
            <person name="Whitman W.B."/>
            <person name="Kyrpides N.C."/>
        </authorList>
    </citation>
    <scope>NUCLEOTIDE SEQUENCE [LARGE SCALE GENOMIC DNA]</scope>
    <source>
        <strain>ATCC 35101 / DSM 1498 / JR1</strain>
    </source>
</reference>